<reference key="1">
    <citation type="journal article" date="2014" name="Stand. Genomic Sci.">
        <title>Complete genome sequence of Anabaena variabilis ATCC 29413.</title>
        <authorList>
            <person name="Thiel T."/>
            <person name="Pratte B.S."/>
            <person name="Zhong J."/>
            <person name="Goodwin L."/>
            <person name="Copeland A."/>
            <person name="Lucas S."/>
            <person name="Han C."/>
            <person name="Pitluck S."/>
            <person name="Land M.L."/>
            <person name="Kyrpides N.C."/>
            <person name="Woyke T."/>
        </authorList>
    </citation>
    <scope>NUCLEOTIDE SEQUENCE [LARGE SCALE GENOMIC DNA]</scope>
    <source>
        <strain>ATCC 29413 / PCC 7937</strain>
    </source>
</reference>
<feature type="chain" id="PRO_0000231311" description="S-adenosylmethionine:tRNA ribosyltransferase-isomerase">
    <location>
        <begin position="1"/>
        <end position="408"/>
    </location>
</feature>
<name>QUEA_TRIV2</name>
<evidence type="ECO:0000255" key="1">
    <source>
        <dbReference type="HAMAP-Rule" id="MF_00113"/>
    </source>
</evidence>
<keyword id="KW-0963">Cytoplasm</keyword>
<keyword id="KW-0671">Queuosine biosynthesis</keyword>
<keyword id="KW-0949">S-adenosyl-L-methionine</keyword>
<keyword id="KW-0808">Transferase</keyword>
<proteinExistence type="inferred from homology"/>
<comment type="function">
    <text evidence="1">Transfers and isomerizes the ribose moiety from AdoMet to the 7-aminomethyl group of 7-deazaguanine (preQ1-tRNA) to give epoxyqueuosine (oQ-tRNA).</text>
</comment>
<comment type="catalytic activity">
    <reaction evidence="1">
        <text>7-aminomethyl-7-carbaguanosine(34) in tRNA + S-adenosyl-L-methionine = epoxyqueuosine(34) in tRNA + adenine + L-methionine + 2 H(+)</text>
        <dbReference type="Rhea" id="RHEA:32155"/>
        <dbReference type="Rhea" id="RHEA-COMP:10342"/>
        <dbReference type="Rhea" id="RHEA-COMP:18582"/>
        <dbReference type="ChEBI" id="CHEBI:15378"/>
        <dbReference type="ChEBI" id="CHEBI:16708"/>
        <dbReference type="ChEBI" id="CHEBI:57844"/>
        <dbReference type="ChEBI" id="CHEBI:59789"/>
        <dbReference type="ChEBI" id="CHEBI:82833"/>
        <dbReference type="ChEBI" id="CHEBI:194443"/>
        <dbReference type="EC" id="2.4.99.17"/>
    </reaction>
</comment>
<comment type="pathway">
    <text evidence="1">tRNA modification; tRNA-queuosine biosynthesis.</text>
</comment>
<comment type="subunit">
    <text evidence="1">Monomer.</text>
</comment>
<comment type="subcellular location">
    <subcellularLocation>
        <location evidence="1">Cytoplasm</location>
    </subcellularLocation>
</comment>
<comment type="similarity">
    <text evidence="1">Belongs to the QueA family.</text>
</comment>
<organism>
    <name type="scientific">Trichormus variabilis (strain ATCC 29413 / PCC 7937)</name>
    <name type="common">Anabaena variabilis</name>
    <dbReference type="NCBI Taxonomy" id="240292"/>
    <lineage>
        <taxon>Bacteria</taxon>
        <taxon>Bacillati</taxon>
        <taxon>Cyanobacteriota</taxon>
        <taxon>Cyanophyceae</taxon>
        <taxon>Nostocales</taxon>
        <taxon>Nostocaceae</taxon>
        <taxon>Trichormus</taxon>
    </lineage>
</organism>
<gene>
    <name evidence="1" type="primary">queA</name>
    <name type="ordered locus">Ava_4802</name>
</gene>
<sequence length="408" mass="44919">MKKQILQLNLEQTSSAAAEDTNLDCSLAGYDYVLPPERIAQNPAVPRDSSRLLVVNSQTTGKETPPLHQIFRDLPDILRPGDLLIMNNTKVIPARLYGRKSSGAEVEILLLEERKFNCWLALVKPGKRFKKGTQIIFEGLGIRNLGIKNSPHYPLSPEGFPPSPVPNPHQLTATVLETDKATGGRLLQFDLPEGESLVQLLDKFGEIPLPPYITASQAADEQYQTVYAEQPGAIAAPTAGLHFTPELLEKLRDRNINQAFITLHVGVGTFRPVEVEDVATHQMHEEWIEIPAATVAQIKATKAAGGRIIAVGTTVVRALEGAAASGDLQEFCGKTNLFIYPGYKWQVVEGLITNFHLPRSSLLMLVSALIGRERLLNIYQEAIASQYRFYSFGDAMLILPEARGVNSH</sequence>
<dbReference type="EC" id="2.4.99.17" evidence="1"/>
<dbReference type="EMBL" id="CP000117">
    <property type="protein sequence ID" value="ABA24399.1"/>
    <property type="molecule type" value="Genomic_DNA"/>
</dbReference>
<dbReference type="SMR" id="Q3M3N7"/>
<dbReference type="STRING" id="240292.Ava_4802"/>
<dbReference type="KEGG" id="ava:Ava_4802"/>
<dbReference type="eggNOG" id="COG0809">
    <property type="taxonomic scope" value="Bacteria"/>
</dbReference>
<dbReference type="HOGENOM" id="CLU_039110_1_0_3"/>
<dbReference type="UniPathway" id="UPA00392"/>
<dbReference type="Proteomes" id="UP000002533">
    <property type="component" value="Chromosome"/>
</dbReference>
<dbReference type="GO" id="GO:0005737">
    <property type="term" value="C:cytoplasm"/>
    <property type="evidence" value="ECO:0007669"/>
    <property type="project" value="UniProtKB-SubCell"/>
</dbReference>
<dbReference type="GO" id="GO:0051075">
    <property type="term" value="F:S-adenosylmethionine:tRNA ribosyltransferase-isomerase activity"/>
    <property type="evidence" value="ECO:0007669"/>
    <property type="project" value="UniProtKB-EC"/>
</dbReference>
<dbReference type="GO" id="GO:0008616">
    <property type="term" value="P:queuosine biosynthetic process"/>
    <property type="evidence" value="ECO:0007669"/>
    <property type="project" value="UniProtKB-UniRule"/>
</dbReference>
<dbReference type="GO" id="GO:0002099">
    <property type="term" value="P:tRNA wobble guanine modification"/>
    <property type="evidence" value="ECO:0007669"/>
    <property type="project" value="TreeGrafter"/>
</dbReference>
<dbReference type="FunFam" id="3.40.1780.10:FF:000001">
    <property type="entry name" value="S-adenosylmethionine:tRNA ribosyltransferase-isomerase"/>
    <property type="match status" value="1"/>
</dbReference>
<dbReference type="Gene3D" id="2.40.10.240">
    <property type="entry name" value="QueA-like"/>
    <property type="match status" value="1"/>
</dbReference>
<dbReference type="Gene3D" id="3.40.1780.10">
    <property type="entry name" value="QueA-like"/>
    <property type="match status" value="1"/>
</dbReference>
<dbReference type="HAMAP" id="MF_00113">
    <property type="entry name" value="QueA"/>
    <property type="match status" value="1"/>
</dbReference>
<dbReference type="InterPro" id="IPR003699">
    <property type="entry name" value="QueA"/>
</dbReference>
<dbReference type="InterPro" id="IPR042118">
    <property type="entry name" value="QueA_dom1"/>
</dbReference>
<dbReference type="InterPro" id="IPR042119">
    <property type="entry name" value="QueA_dom2"/>
</dbReference>
<dbReference type="InterPro" id="IPR036100">
    <property type="entry name" value="QueA_sf"/>
</dbReference>
<dbReference type="NCBIfam" id="NF001140">
    <property type="entry name" value="PRK00147.1"/>
    <property type="match status" value="1"/>
</dbReference>
<dbReference type="NCBIfam" id="TIGR00113">
    <property type="entry name" value="queA"/>
    <property type="match status" value="1"/>
</dbReference>
<dbReference type="PANTHER" id="PTHR30307">
    <property type="entry name" value="S-ADENOSYLMETHIONINE:TRNA RIBOSYLTRANSFERASE-ISOMERASE"/>
    <property type="match status" value="1"/>
</dbReference>
<dbReference type="PANTHER" id="PTHR30307:SF0">
    <property type="entry name" value="S-ADENOSYLMETHIONINE:TRNA RIBOSYLTRANSFERASE-ISOMERASE"/>
    <property type="match status" value="1"/>
</dbReference>
<dbReference type="Pfam" id="PF02547">
    <property type="entry name" value="Queuosine_synth"/>
    <property type="match status" value="1"/>
</dbReference>
<dbReference type="SUPFAM" id="SSF111337">
    <property type="entry name" value="QueA-like"/>
    <property type="match status" value="1"/>
</dbReference>
<protein>
    <recommendedName>
        <fullName evidence="1">S-adenosylmethionine:tRNA ribosyltransferase-isomerase</fullName>
        <ecNumber evidence="1">2.4.99.17</ecNumber>
    </recommendedName>
    <alternativeName>
        <fullName evidence="1">Queuosine biosynthesis protein QueA</fullName>
    </alternativeName>
</protein>
<accession>Q3M3N7</accession>